<accession>Q5ZIK9</accession>
<evidence type="ECO:0000250" key="1"/>
<evidence type="ECO:0000305" key="2"/>
<feature type="chain" id="PRO_0000328666" description="Coatomer subunit epsilon">
    <location>
        <begin position="1"/>
        <end position="308"/>
    </location>
</feature>
<keyword id="KW-0963">Cytoplasm</keyword>
<keyword id="KW-0968">Cytoplasmic vesicle</keyword>
<keyword id="KW-0931">ER-Golgi transport</keyword>
<keyword id="KW-0333">Golgi apparatus</keyword>
<keyword id="KW-0472">Membrane</keyword>
<keyword id="KW-0653">Protein transport</keyword>
<keyword id="KW-1185">Reference proteome</keyword>
<keyword id="KW-0813">Transport</keyword>
<organism>
    <name type="scientific">Gallus gallus</name>
    <name type="common">Chicken</name>
    <dbReference type="NCBI Taxonomy" id="9031"/>
    <lineage>
        <taxon>Eukaryota</taxon>
        <taxon>Metazoa</taxon>
        <taxon>Chordata</taxon>
        <taxon>Craniata</taxon>
        <taxon>Vertebrata</taxon>
        <taxon>Euteleostomi</taxon>
        <taxon>Archelosauria</taxon>
        <taxon>Archosauria</taxon>
        <taxon>Dinosauria</taxon>
        <taxon>Saurischia</taxon>
        <taxon>Theropoda</taxon>
        <taxon>Coelurosauria</taxon>
        <taxon>Aves</taxon>
        <taxon>Neognathae</taxon>
        <taxon>Galloanserae</taxon>
        <taxon>Galliformes</taxon>
        <taxon>Phasianidae</taxon>
        <taxon>Phasianinae</taxon>
        <taxon>Gallus</taxon>
    </lineage>
</organism>
<name>COPE_CHICK</name>
<reference key="1">
    <citation type="journal article" date="2005" name="Genome Biol.">
        <title>Full-length cDNAs from chicken bursal lymphocytes to facilitate gene function analysis.</title>
        <authorList>
            <person name="Caldwell R.B."/>
            <person name="Kierzek A.M."/>
            <person name="Arakawa H."/>
            <person name="Bezzubov Y."/>
            <person name="Zaim J."/>
            <person name="Fiedler P."/>
            <person name="Kutter S."/>
            <person name="Blagodatski A."/>
            <person name="Kostovska D."/>
            <person name="Koter M."/>
            <person name="Plachy J."/>
            <person name="Carninci P."/>
            <person name="Hayashizaki Y."/>
            <person name="Buerstedde J.-M."/>
        </authorList>
    </citation>
    <scope>NUCLEOTIDE SEQUENCE [LARGE SCALE MRNA]</scope>
    <source>
        <strain>CB</strain>
        <tissue>Bursa of Fabricius</tissue>
    </source>
</reference>
<gene>
    <name type="primary">COPE</name>
    <name type="ORF">RCJMB04_25f12</name>
</gene>
<dbReference type="EMBL" id="AJ720775">
    <property type="protein sequence ID" value="CAG32434.1"/>
    <property type="molecule type" value="mRNA"/>
</dbReference>
<dbReference type="RefSeq" id="NP_001006339.1">
    <property type="nucleotide sequence ID" value="NM_001006339.2"/>
</dbReference>
<dbReference type="SMR" id="Q5ZIK9"/>
<dbReference type="BioGRID" id="681127">
    <property type="interactions" value="1"/>
</dbReference>
<dbReference type="FunCoup" id="Q5ZIK9">
    <property type="interactions" value="2834"/>
</dbReference>
<dbReference type="STRING" id="9031.ENSGALP00000004982"/>
<dbReference type="PaxDb" id="9031-ENSGALP00000004982"/>
<dbReference type="GeneID" id="420117"/>
<dbReference type="KEGG" id="gga:420117"/>
<dbReference type="CTD" id="11316"/>
<dbReference type="VEuPathDB" id="HostDB:geneid_420117"/>
<dbReference type="eggNOG" id="KOG3081">
    <property type="taxonomic scope" value="Eukaryota"/>
</dbReference>
<dbReference type="HOGENOM" id="CLU_049363_0_0_1"/>
<dbReference type="InParanoid" id="Q5ZIK9"/>
<dbReference type="OMA" id="MIVLSQH"/>
<dbReference type="OrthoDB" id="310217at2759"/>
<dbReference type="PhylomeDB" id="Q5ZIK9"/>
<dbReference type="TreeFam" id="TF313390"/>
<dbReference type="Reactome" id="R-GGA-6807878">
    <property type="pathway name" value="COPI-mediated anterograde transport"/>
</dbReference>
<dbReference type="Reactome" id="R-GGA-6811434">
    <property type="pathway name" value="COPI-dependent Golgi-to-ER retrograde traffic"/>
</dbReference>
<dbReference type="PRO" id="PR:Q5ZIK9"/>
<dbReference type="Proteomes" id="UP000000539">
    <property type="component" value="Chromosome 28"/>
</dbReference>
<dbReference type="Bgee" id="ENSGALG00000003153">
    <property type="expression patterns" value="Expressed in colon and 14 other cell types or tissues"/>
</dbReference>
<dbReference type="GO" id="GO:0030126">
    <property type="term" value="C:COPI vesicle coat"/>
    <property type="evidence" value="ECO:0000318"/>
    <property type="project" value="GO_Central"/>
</dbReference>
<dbReference type="GO" id="GO:0000139">
    <property type="term" value="C:Golgi membrane"/>
    <property type="evidence" value="ECO:0007669"/>
    <property type="project" value="UniProtKB-SubCell"/>
</dbReference>
<dbReference type="GO" id="GO:0005198">
    <property type="term" value="F:structural molecule activity"/>
    <property type="evidence" value="ECO:0007669"/>
    <property type="project" value="InterPro"/>
</dbReference>
<dbReference type="GO" id="GO:0006888">
    <property type="term" value="P:endoplasmic reticulum to Golgi vesicle-mediated transport"/>
    <property type="evidence" value="ECO:0000318"/>
    <property type="project" value="GO_Central"/>
</dbReference>
<dbReference type="GO" id="GO:0006891">
    <property type="term" value="P:intra-Golgi vesicle-mediated transport"/>
    <property type="evidence" value="ECO:0000318"/>
    <property type="project" value="GO_Central"/>
</dbReference>
<dbReference type="GO" id="GO:0015031">
    <property type="term" value="P:protein transport"/>
    <property type="evidence" value="ECO:0007669"/>
    <property type="project" value="UniProtKB-KW"/>
</dbReference>
<dbReference type="GO" id="GO:0006890">
    <property type="term" value="P:retrograde vesicle-mediated transport, Golgi to endoplasmic reticulum"/>
    <property type="evidence" value="ECO:0007669"/>
    <property type="project" value="InterPro"/>
</dbReference>
<dbReference type="FunFam" id="1.25.40.10:FF:000148">
    <property type="entry name" value="Coatomer subunit epsilon"/>
    <property type="match status" value="1"/>
</dbReference>
<dbReference type="Gene3D" id="1.25.40.10">
    <property type="entry name" value="Tetratricopeptide repeat domain"/>
    <property type="match status" value="1"/>
</dbReference>
<dbReference type="InterPro" id="IPR006822">
    <property type="entry name" value="Coatomer_esu"/>
</dbReference>
<dbReference type="InterPro" id="IPR011990">
    <property type="entry name" value="TPR-like_helical_dom_sf"/>
</dbReference>
<dbReference type="PANTHER" id="PTHR10805">
    <property type="entry name" value="COATOMER SUBUNIT EPSILON"/>
    <property type="match status" value="1"/>
</dbReference>
<dbReference type="PANTHER" id="PTHR10805:SF0">
    <property type="entry name" value="COATOMER SUBUNIT EPSILON"/>
    <property type="match status" value="1"/>
</dbReference>
<dbReference type="Pfam" id="PF04733">
    <property type="entry name" value="Coatomer_E"/>
    <property type="match status" value="1"/>
</dbReference>
<dbReference type="PIRSF" id="PIRSF016478">
    <property type="entry name" value="Coatomer_esu"/>
    <property type="match status" value="1"/>
</dbReference>
<dbReference type="SUPFAM" id="SSF48452">
    <property type="entry name" value="TPR-like"/>
    <property type="match status" value="1"/>
</dbReference>
<comment type="function">
    <text evidence="1">The coatomer is a cytosolic protein complex that binds to dilysine motifs and reversibly associates with Golgi non-clathrin-coated vesicles, which further mediate biosynthetic protein transport from the ER, via the Golgi up to the trans Golgi network. The coatomer complex is required for budding from Golgi membranes, and is essential for the retrograde Golgi-to-ER transport of dilysine-tagged proteins (By similarity).</text>
</comment>
<comment type="subunit">
    <text evidence="1">Oligomeric complex that consists of at least the alpha, beta, beta', gamma, delta, epsilon and zeta subunits.</text>
</comment>
<comment type="subcellular location">
    <subcellularLocation>
        <location evidence="1">Cytoplasm</location>
    </subcellularLocation>
    <subcellularLocation>
        <location evidence="1">Golgi apparatus membrane</location>
        <topology evidence="1">Peripheral membrane protein</topology>
        <orientation evidence="1">Cytoplasmic side</orientation>
    </subcellularLocation>
    <subcellularLocation>
        <location evidence="1">Cytoplasmic vesicle</location>
        <location evidence="1">COPI-coated vesicle membrane</location>
        <topology evidence="1">Peripheral membrane protein</topology>
        <orientation evidence="1">Cytoplasmic side</orientation>
    </subcellularLocation>
    <text evidence="1">The coatomer is cytoplasmic or polymerized on the cytoplasmic side of the Golgi, as well as on the vesicles/buds originating from it.</text>
</comment>
<comment type="similarity">
    <text evidence="2">Belongs to the COPE family.</text>
</comment>
<protein>
    <recommendedName>
        <fullName>Coatomer subunit epsilon</fullName>
    </recommendedName>
    <alternativeName>
        <fullName>Epsilon-coat protein</fullName>
        <shortName>Epsilon-COP</shortName>
    </alternativeName>
</protein>
<proteinExistence type="evidence at transcript level"/>
<sequence>MASGAGAGPAGQGGEADELFDVKNSFYIGAYQAAINEAQRIKPSNPEKETERDVFLFRSYIAQRKYGVVLDEIKANASPELQAVRMFAEYLSNESQRDAIVADLDKKMAKSVDVANTTFLLMAASIYFHDKNPDAALRTLHQGESLECMAMMIQILLKLDRLDLARKELKKMQEQDEDATLTQLATAWVNLAIGGEKLQDAYYIFQEMADKCSSTLLLLNGQAACYMAQGKWDDAEGVLQEALDKDSGHPETLINFVVLSQHLGKPPEVTNRYLSQLKDAHKNHPFIKEYQAKENDFDRLAMQYAPSA</sequence>